<evidence type="ECO:0000255" key="1">
    <source>
        <dbReference type="HAMAP-Rule" id="MF_00624"/>
    </source>
</evidence>
<keyword id="KW-0067">ATP-binding</keyword>
<keyword id="KW-0119">Carbohydrate metabolism</keyword>
<keyword id="KW-0320">Glycogen biosynthesis</keyword>
<keyword id="KW-0321">Glycogen metabolism</keyword>
<keyword id="KW-0547">Nucleotide-binding</keyword>
<keyword id="KW-0548">Nucleotidyltransferase</keyword>
<keyword id="KW-0808">Transferase</keyword>
<gene>
    <name evidence="1" type="primary">glgC1</name>
    <name type="ordered locus">VV2313</name>
</gene>
<proteinExistence type="inferred from homology"/>
<reference key="1">
    <citation type="journal article" date="2003" name="Genome Res.">
        <title>Comparative genome analysis of Vibrio vulnificus, a marine pathogen.</title>
        <authorList>
            <person name="Chen C.-Y."/>
            <person name="Wu K.-M."/>
            <person name="Chang Y.-C."/>
            <person name="Chang C.-H."/>
            <person name="Tsai H.-C."/>
            <person name="Liao T.-L."/>
            <person name="Liu Y.-M."/>
            <person name="Chen H.-J."/>
            <person name="Shen A.B.-T."/>
            <person name="Li J.-C."/>
            <person name="Su T.-L."/>
            <person name="Shao C.-P."/>
            <person name="Lee C.-T."/>
            <person name="Hor L.-I."/>
            <person name="Tsai S.-F."/>
        </authorList>
    </citation>
    <scope>NUCLEOTIDE SEQUENCE [LARGE SCALE GENOMIC DNA]</scope>
    <source>
        <strain>YJ016</strain>
    </source>
</reference>
<organism>
    <name type="scientific">Vibrio vulnificus (strain YJ016)</name>
    <dbReference type="NCBI Taxonomy" id="196600"/>
    <lineage>
        <taxon>Bacteria</taxon>
        <taxon>Pseudomonadati</taxon>
        <taxon>Pseudomonadota</taxon>
        <taxon>Gammaproteobacteria</taxon>
        <taxon>Vibrionales</taxon>
        <taxon>Vibrionaceae</taxon>
        <taxon>Vibrio</taxon>
    </lineage>
</organism>
<feature type="chain" id="PRO_0000195350" description="Glucose-1-phosphate adenylyltransferase 1">
    <location>
        <begin position="1"/>
        <end position="405"/>
    </location>
</feature>
<feature type="binding site" evidence="1">
    <location>
        <position position="96"/>
    </location>
    <ligand>
        <name>alpha-D-glucose 1-phosphate</name>
        <dbReference type="ChEBI" id="CHEBI:58601"/>
    </ligand>
</feature>
<feature type="binding site" evidence="1">
    <location>
        <position position="161"/>
    </location>
    <ligand>
        <name>alpha-D-glucose 1-phosphate</name>
        <dbReference type="ChEBI" id="CHEBI:58601"/>
    </ligand>
</feature>
<feature type="binding site" evidence="1">
    <location>
        <begin position="176"/>
        <end position="177"/>
    </location>
    <ligand>
        <name>alpha-D-glucose 1-phosphate</name>
        <dbReference type="ChEBI" id="CHEBI:58601"/>
    </ligand>
</feature>
<feature type="binding site" evidence="1">
    <location>
        <position position="194"/>
    </location>
    <ligand>
        <name>alpha-D-glucose 1-phosphate</name>
        <dbReference type="ChEBI" id="CHEBI:58601"/>
    </ligand>
</feature>
<name>GLGC1_VIBVY</name>
<protein>
    <recommendedName>
        <fullName evidence="1">Glucose-1-phosphate adenylyltransferase 1</fullName>
        <ecNumber evidence="1">2.7.7.27</ecNumber>
    </recommendedName>
    <alternativeName>
        <fullName evidence="1">ADP-glucose pyrophosphorylase 1</fullName>
        <shortName evidence="1">ADPGlc PPase 1</shortName>
    </alternativeName>
    <alternativeName>
        <fullName evidence="1">ADP-glucose synthase 1</fullName>
    </alternativeName>
</protein>
<comment type="function">
    <text evidence="1">Involved in the biosynthesis of ADP-glucose, a building block required for the elongation reactions to produce glycogen. Catalyzes the reaction between ATP and alpha-D-glucose 1-phosphate (G1P) to produce pyrophosphate and ADP-Glc.</text>
</comment>
<comment type="catalytic activity">
    <reaction evidence="1">
        <text>alpha-D-glucose 1-phosphate + ATP + H(+) = ADP-alpha-D-glucose + diphosphate</text>
        <dbReference type="Rhea" id="RHEA:12120"/>
        <dbReference type="ChEBI" id="CHEBI:15378"/>
        <dbReference type="ChEBI" id="CHEBI:30616"/>
        <dbReference type="ChEBI" id="CHEBI:33019"/>
        <dbReference type="ChEBI" id="CHEBI:57498"/>
        <dbReference type="ChEBI" id="CHEBI:58601"/>
        <dbReference type="EC" id="2.7.7.27"/>
    </reaction>
</comment>
<comment type="pathway">
    <text evidence="1">Glycan biosynthesis; glycogen biosynthesis.</text>
</comment>
<comment type="subunit">
    <text evidence="1">Homotetramer.</text>
</comment>
<comment type="similarity">
    <text evidence="1">Belongs to the bacterial/plant glucose-1-phosphate adenylyltransferase family.</text>
</comment>
<dbReference type="EC" id="2.7.7.27" evidence="1"/>
<dbReference type="EMBL" id="BA000037">
    <property type="protein sequence ID" value="BAC95077.1"/>
    <property type="molecule type" value="Genomic_DNA"/>
</dbReference>
<dbReference type="RefSeq" id="WP_011150807.1">
    <property type="nucleotide sequence ID" value="NC_005139.1"/>
</dbReference>
<dbReference type="SMR" id="Q7MJ49"/>
<dbReference type="STRING" id="672.VV93_v1c20230"/>
<dbReference type="KEGG" id="vvy:VV2313"/>
<dbReference type="PATRIC" id="fig|196600.6.peg.2322"/>
<dbReference type="eggNOG" id="COG0448">
    <property type="taxonomic scope" value="Bacteria"/>
</dbReference>
<dbReference type="HOGENOM" id="CLU_029499_14_1_6"/>
<dbReference type="UniPathway" id="UPA00164"/>
<dbReference type="Proteomes" id="UP000002675">
    <property type="component" value="Chromosome I"/>
</dbReference>
<dbReference type="GO" id="GO:0005524">
    <property type="term" value="F:ATP binding"/>
    <property type="evidence" value="ECO:0007669"/>
    <property type="project" value="UniProtKB-KW"/>
</dbReference>
<dbReference type="GO" id="GO:0008878">
    <property type="term" value="F:glucose-1-phosphate adenylyltransferase activity"/>
    <property type="evidence" value="ECO:0007669"/>
    <property type="project" value="UniProtKB-UniRule"/>
</dbReference>
<dbReference type="GO" id="GO:0005978">
    <property type="term" value="P:glycogen biosynthetic process"/>
    <property type="evidence" value="ECO:0007669"/>
    <property type="project" value="UniProtKB-UniRule"/>
</dbReference>
<dbReference type="CDD" id="cd02508">
    <property type="entry name" value="ADP_Glucose_PP"/>
    <property type="match status" value="1"/>
</dbReference>
<dbReference type="CDD" id="cd04651">
    <property type="entry name" value="LbH_G1P_AT_C"/>
    <property type="match status" value="1"/>
</dbReference>
<dbReference type="Gene3D" id="2.160.10.10">
    <property type="entry name" value="Hexapeptide repeat proteins"/>
    <property type="match status" value="1"/>
</dbReference>
<dbReference type="Gene3D" id="3.90.550.10">
    <property type="entry name" value="Spore Coat Polysaccharide Biosynthesis Protein SpsA, Chain A"/>
    <property type="match status" value="1"/>
</dbReference>
<dbReference type="HAMAP" id="MF_00624">
    <property type="entry name" value="GlgC"/>
    <property type="match status" value="1"/>
</dbReference>
<dbReference type="InterPro" id="IPR011831">
    <property type="entry name" value="ADP-Glc_PPase"/>
</dbReference>
<dbReference type="InterPro" id="IPR005836">
    <property type="entry name" value="ADP_Glu_pyroP_CS"/>
</dbReference>
<dbReference type="InterPro" id="IPR023049">
    <property type="entry name" value="GlgC_bac"/>
</dbReference>
<dbReference type="InterPro" id="IPR056818">
    <property type="entry name" value="GlmU/GlgC-like_hexapep"/>
</dbReference>
<dbReference type="InterPro" id="IPR005835">
    <property type="entry name" value="NTP_transferase_dom"/>
</dbReference>
<dbReference type="InterPro" id="IPR029044">
    <property type="entry name" value="Nucleotide-diphossugar_trans"/>
</dbReference>
<dbReference type="InterPro" id="IPR011004">
    <property type="entry name" value="Trimer_LpxA-like_sf"/>
</dbReference>
<dbReference type="NCBIfam" id="TIGR02091">
    <property type="entry name" value="glgC"/>
    <property type="match status" value="1"/>
</dbReference>
<dbReference type="NCBIfam" id="NF001947">
    <property type="entry name" value="PRK00725.1"/>
    <property type="match status" value="1"/>
</dbReference>
<dbReference type="NCBIfam" id="NF002023">
    <property type="entry name" value="PRK00844.1"/>
    <property type="match status" value="1"/>
</dbReference>
<dbReference type="PANTHER" id="PTHR43523:SF2">
    <property type="entry name" value="GLUCOSE-1-PHOSPHATE ADENYLYLTRANSFERASE"/>
    <property type="match status" value="1"/>
</dbReference>
<dbReference type="PANTHER" id="PTHR43523">
    <property type="entry name" value="GLUCOSE-1-PHOSPHATE ADENYLYLTRANSFERASE-RELATED"/>
    <property type="match status" value="1"/>
</dbReference>
<dbReference type="Pfam" id="PF24894">
    <property type="entry name" value="Hexapep_GlmU"/>
    <property type="match status" value="1"/>
</dbReference>
<dbReference type="Pfam" id="PF00483">
    <property type="entry name" value="NTP_transferase"/>
    <property type="match status" value="1"/>
</dbReference>
<dbReference type="SUPFAM" id="SSF53448">
    <property type="entry name" value="Nucleotide-diphospho-sugar transferases"/>
    <property type="match status" value="1"/>
</dbReference>
<dbReference type="SUPFAM" id="SSF51161">
    <property type="entry name" value="Trimeric LpxA-like enzymes"/>
    <property type="match status" value="1"/>
</dbReference>
<dbReference type="PROSITE" id="PS00808">
    <property type="entry name" value="ADP_GLC_PYROPHOSPH_1"/>
    <property type="match status" value="1"/>
</dbReference>
<dbReference type="PROSITE" id="PS00809">
    <property type="entry name" value="ADP_GLC_PYROPHOSPH_2"/>
    <property type="match status" value="1"/>
</dbReference>
<dbReference type="PROSITE" id="PS00810">
    <property type="entry name" value="ADP_GLC_PYROPHOSPH_3"/>
    <property type="match status" value="1"/>
</dbReference>
<accession>Q7MJ49</accession>
<sequence>MAGVLGMILAGGEGSRLRPLTESRSKPAVPFGGSYRLIDFALNNFVNADLMRIYVLTQFKSQSLFHHMKKGWNINGITDRFIDPIPAQMRTGKRWYEGTADAIYQNLRFMELSEPEQVCIFGSDHIYKMDIKQMLSFHKEKQAALTVSALRMPLAEASQFGVIEVDAEGRMVGFEEKPSAPKSIPGDPDFALVSMGNYIFEADVLFAELIEDADNENSSHDFGKDIIPKMFPRGDVFVYDFSQNRISGEKAEVYWRDVGTIDAYWQAHMDLLKTDAPFSLYNRKWPLHTYQPPLPPATFTDSDNGRVQIIDSLVCNGSYVRGSRIEKSVLGFRSNIASACDISESILLGDVKVGEGCVLRRVIVDKDVDIAPGTQIGVNLQEDKKVFHVSDDGIVVIPKGARVGY</sequence>